<feature type="chain" id="PRO_1000084293" description="Methylenetetrahydrofolate--tRNA-(uracil-5-)-methyltransferase TrmFO">
    <location>
        <begin position="1"/>
        <end position="444"/>
    </location>
</feature>
<feature type="binding site" evidence="1">
    <location>
        <begin position="10"/>
        <end position="15"/>
    </location>
    <ligand>
        <name>FAD</name>
        <dbReference type="ChEBI" id="CHEBI:57692"/>
    </ligand>
</feature>
<proteinExistence type="inferred from homology"/>
<organism>
    <name type="scientific">Streptococcus gordonii (strain Challis / ATCC 35105 / BCRC 15272 / CH1 / DL1 / V288)</name>
    <dbReference type="NCBI Taxonomy" id="467705"/>
    <lineage>
        <taxon>Bacteria</taxon>
        <taxon>Bacillati</taxon>
        <taxon>Bacillota</taxon>
        <taxon>Bacilli</taxon>
        <taxon>Lactobacillales</taxon>
        <taxon>Streptococcaceae</taxon>
        <taxon>Streptococcus</taxon>
    </lineage>
</organism>
<protein>
    <recommendedName>
        <fullName evidence="1">Methylenetetrahydrofolate--tRNA-(uracil-5-)-methyltransferase TrmFO</fullName>
        <ecNumber evidence="1">2.1.1.74</ecNumber>
    </recommendedName>
    <alternativeName>
        <fullName evidence="1">Folate-dependent tRNA (uracil-5-)-methyltransferase</fullName>
    </alternativeName>
    <alternativeName>
        <fullName evidence="1">Folate-dependent tRNA(M-5-U54)-methyltransferase</fullName>
    </alternativeName>
</protein>
<accession>A8AXH0</accession>
<name>TRMFO_STRGC</name>
<sequence length="444" mass="49330">MSQSYINVIGAGLAGSEAAYQIAKRGIPVKLYEMRGVKSTPQHKTADFAELVCSNSLRGDALTNAVGLLKEEMRRLDSVILKSAEATRVPAGGALAVDREGFSQMVTELVTNHPLIEVIREEITEIPNDDITVIATGPLTSDALAEKIHALNGGNGFYFYDAAAPIIDVNTIDMTKIYLKSRYDKGEAAYLNAPMTKQEFMDFHDALVNAEEAPLNSFEKEKYFEGCMPIEVMAKRGIKTMLYGPMKPVGLEYPDDYQGPRDGEYKTPYAVVQLRQDNAAGSLYNIVGFQTHLKWGEQKRVFQMIPGLENAEFVRYGVMHRNSYMDSPNLLEQTFRSKKQPNLFFAGQMTGVEGYVESAASGLVAGINAARLFKGEEALVFPETTAIGSLPHYVTHADSKHFQPMNVNFGIIKELDGPRIRDKKERYEKIAERALQDLAPYLDK</sequence>
<reference key="1">
    <citation type="journal article" date="2007" name="J. Bacteriol.">
        <title>Genome-wide transcriptional changes in Streptococcus gordonii in response to competence signaling peptide.</title>
        <authorList>
            <person name="Vickerman M.M."/>
            <person name="Iobst S."/>
            <person name="Jesionowski A.M."/>
            <person name="Gill S.R."/>
        </authorList>
    </citation>
    <scope>NUCLEOTIDE SEQUENCE [LARGE SCALE GENOMIC DNA]</scope>
    <source>
        <strain>Challis / ATCC 35105 / BCRC 15272 / CH1 / DL1 / V288</strain>
    </source>
</reference>
<dbReference type="EC" id="2.1.1.74" evidence="1"/>
<dbReference type="EMBL" id="CP000725">
    <property type="protein sequence ID" value="ABV09583.1"/>
    <property type="molecule type" value="Genomic_DNA"/>
</dbReference>
<dbReference type="RefSeq" id="WP_012000595.1">
    <property type="nucleotide sequence ID" value="NC_009785.1"/>
</dbReference>
<dbReference type="SMR" id="A8AXH0"/>
<dbReference type="STRING" id="467705.SGO_1193"/>
<dbReference type="KEGG" id="sgo:SGO_1193"/>
<dbReference type="eggNOG" id="COG1206">
    <property type="taxonomic scope" value="Bacteria"/>
</dbReference>
<dbReference type="HOGENOM" id="CLU_033057_1_0_9"/>
<dbReference type="Proteomes" id="UP000001131">
    <property type="component" value="Chromosome"/>
</dbReference>
<dbReference type="GO" id="GO:0005829">
    <property type="term" value="C:cytosol"/>
    <property type="evidence" value="ECO:0007669"/>
    <property type="project" value="TreeGrafter"/>
</dbReference>
<dbReference type="GO" id="GO:0050660">
    <property type="term" value="F:flavin adenine dinucleotide binding"/>
    <property type="evidence" value="ECO:0007669"/>
    <property type="project" value="UniProtKB-UniRule"/>
</dbReference>
<dbReference type="GO" id="GO:0047151">
    <property type="term" value="F:tRNA (uracil(54)-C5)-methyltransferase activity, 5,10-methylenetetrahydrofolate-dependent"/>
    <property type="evidence" value="ECO:0007669"/>
    <property type="project" value="UniProtKB-UniRule"/>
</dbReference>
<dbReference type="GO" id="GO:0030488">
    <property type="term" value="P:tRNA methylation"/>
    <property type="evidence" value="ECO:0007669"/>
    <property type="project" value="TreeGrafter"/>
</dbReference>
<dbReference type="GO" id="GO:0002098">
    <property type="term" value="P:tRNA wobble uridine modification"/>
    <property type="evidence" value="ECO:0007669"/>
    <property type="project" value="TreeGrafter"/>
</dbReference>
<dbReference type="FunFam" id="3.50.50.60:FF:000035">
    <property type="entry name" value="Methylenetetrahydrofolate--tRNA-(uracil-5-)-methyltransferase TrmFO"/>
    <property type="match status" value="1"/>
</dbReference>
<dbReference type="FunFam" id="3.50.50.60:FF:000040">
    <property type="entry name" value="Methylenetetrahydrofolate--tRNA-(uracil-5-)-methyltransferase TrmFO"/>
    <property type="match status" value="1"/>
</dbReference>
<dbReference type="Gene3D" id="3.50.50.60">
    <property type="entry name" value="FAD/NAD(P)-binding domain"/>
    <property type="match status" value="2"/>
</dbReference>
<dbReference type="HAMAP" id="MF_01037">
    <property type="entry name" value="TrmFO"/>
    <property type="match status" value="1"/>
</dbReference>
<dbReference type="InterPro" id="IPR036188">
    <property type="entry name" value="FAD/NAD-bd_sf"/>
</dbReference>
<dbReference type="InterPro" id="IPR002218">
    <property type="entry name" value="MnmG-rel"/>
</dbReference>
<dbReference type="InterPro" id="IPR020595">
    <property type="entry name" value="MnmG-rel_CS"/>
</dbReference>
<dbReference type="InterPro" id="IPR040131">
    <property type="entry name" value="MnmG_N"/>
</dbReference>
<dbReference type="InterPro" id="IPR004417">
    <property type="entry name" value="TrmFO"/>
</dbReference>
<dbReference type="NCBIfam" id="TIGR00137">
    <property type="entry name" value="gid_trmFO"/>
    <property type="match status" value="1"/>
</dbReference>
<dbReference type="NCBIfam" id="NF003739">
    <property type="entry name" value="PRK05335.1"/>
    <property type="match status" value="1"/>
</dbReference>
<dbReference type="PANTHER" id="PTHR11806">
    <property type="entry name" value="GLUCOSE INHIBITED DIVISION PROTEIN A"/>
    <property type="match status" value="1"/>
</dbReference>
<dbReference type="PANTHER" id="PTHR11806:SF2">
    <property type="entry name" value="METHYLENETETRAHYDROFOLATE--TRNA-(URACIL-5-)-METHYLTRANSFERASE TRMFO"/>
    <property type="match status" value="1"/>
</dbReference>
<dbReference type="Pfam" id="PF01134">
    <property type="entry name" value="GIDA"/>
    <property type="match status" value="1"/>
</dbReference>
<dbReference type="SUPFAM" id="SSF51905">
    <property type="entry name" value="FAD/NAD(P)-binding domain"/>
    <property type="match status" value="1"/>
</dbReference>
<dbReference type="PROSITE" id="PS01281">
    <property type="entry name" value="GIDA_2"/>
    <property type="match status" value="1"/>
</dbReference>
<evidence type="ECO:0000255" key="1">
    <source>
        <dbReference type="HAMAP-Rule" id="MF_01037"/>
    </source>
</evidence>
<gene>
    <name evidence="1" type="primary">trmFO</name>
    <name type="synonym">gid</name>
    <name type="ordered locus">SGO_1193</name>
</gene>
<comment type="function">
    <text evidence="1">Catalyzes the folate-dependent formation of 5-methyl-uridine at position 54 (M-5-U54) in all tRNAs.</text>
</comment>
<comment type="catalytic activity">
    <reaction evidence="1">
        <text>uridine(54) in tRNA + (6R)-5,10-methylene-5,6,7,8-tetrahydrofolate + NADH + H(+) = 5-methyluridine(54) in tRNA + (6S)-5,6,7,8-tetrahydrofolate + NAD(+)</text>
        <dbReference type="Rhea" id="RHEA:16873"/>
        <dbReference type="Rhea" id="RHEA-COMP:10167"/>
        <dbReference type="Rhea" id="RHEA-COMP:10193"/>
        <dbReference type="ChEBI" id="CHEBI:15378"/>
        <dbReference type="ChEBI" id="CHEBI:15636"/>
        <dbReference type="ChEBI" id="CHEBI:57453"/>
        <dbReference type="ChEBI" id="CHEBI:57540"/>
        <dbReference type="ChEBI" id="CHEBI:57945"/>
        <dbReference type="ChEBI" id="CHEBI:65315"/>
        <dbReference type="ChEBI" id="CHEBI:74447"/>
        <dbReference type="EC" id="2.1.1.74"/>
    </reaction>
</comment>
<comment type="catalytic activity">
    <reaction evidence="1">
        <text>uridine(54) in tRNA + (6R)-5,10-methylene-5,6,7,8-tetrahydrofolate + NADPH + H(+) = 5-methyluridine(54) in tRNA + (6S)-5,6,7,8-tetrahydrofolate + NADP(+)</text>
        <dbReference type="Rhea" id="RHEA:62372"/>
        <dbReference type="Rhea" id="RHEA-COMP:10167"/>
        <dbReference type="Rhea" id="RHEA-COMP:10193"/>
        <dbReference type="ChEBI" id="CHEBI:15378"/>
        <dbReference type="ChEBI" id="CHEBI:15636"/>
        <dbReference type="ChEBI" id="CHEBI:57453"/>
        <dbReference type="ChEBI" id="CHEBI:57783"/>
        <dbReference type="ChEBI" id="CHEBI:58349"/>
        <dbReference type="ChEBI" id="CHEBI:65315"/>
        <dbReference type="ChEBI" id="CHEBI:74447"/>
        <dbReference type="EC" id="2.1.1.74"/>
    </reaction>
</comment>
<comment type="cofactor">
    <cofactor evidence="1">
        <name>FAD</name>
        <dbReference type="ChEBI" id="CHEBI:57692"/>
    </cofactor>
</comment>
<comment type="subcellular location">
    <subcellularLocation>
        <location evidence="1">Cytoplasm</location>
    </subcellularLocation>
</comment>
<comment type="similarity">
    <text evidence="1">Belongs to the MnmG family. TrmFO subfamily.</text>
</comment>
<keyword id="KW-0963">Cytoplasm</keyword>
<keyword id="KW-0274">FAD</keyword>
<keyword id="KW-0285">Flavoprotein</keyword>
<keyword id="KW-0489">Methyltransferase</keyword>
<keyword id="KW-0520">NAD</keyword>
<keyword id="KW-0521">NADP</keyword>
<keyword id="KW-1185">Reference proteome</keyword>
<keyword id="KW-0808">Transferase</keyword>
<keyword id="KW-0819">tRNA processing</keyword>